<organism>
    <name type="scientific">Dichotomyctere fluviatilis</name>
    <name type="common">Green pufferfish</name>
    <name type="synonym">Tetraodon fluviatilis</name>
    <dbReference type="NCBI Taxonomy" id="2593188"/>
    <lineage>
        <taxon>Eukaryota</taxon>
        <taxon>Metazoa</taxon>
        <taxon>Chordata</taxon>
        <taxon>Craniata</taxon>
        <taxon>Vertebrata</taxon>
        <taxon>Euteleostomi</taxon>
        <taxon>Actinopterygii</taxon>
        <taxon>Neopterygii</taxon>
        <taxon>Teleostei</taxon>
        <taxon>Neoteleostei</taxon>
        <taxon>Acanthomorphata</taxon>
        <taxon>Eupercaria</taxon>
        <taxon>Tetraodontiformes</taxon>
        <taxon>Tetradontoidea</taxon>
        <taxon>Tetraodontidae</taxon>
        <taxon>Dichotomyctere</taxon>
    </lineage>
</organism>
<evidence type="ECO:0000250" key="1"/>
<evidence type="ECO:0000250" key="2">
    <source>
        <dbReference type="UniProtKB" id="Q12824"/>
    </source>
</evidence>
<evidence type="ECO:0000250" key="3">
    <source>
        <dbReference type="UniProtKB" id="Q9Z0H3"/>
    </source>
</evidence>
<evidence type="ECO:0000305" key="4"/>
<reference key="1">
    <citation type="submission" date="1997-06" db="EMBL/GenBank/DDBJ databases">
        <title>Genomic structure and sequence of SNF5 gene of puffer fish (Tetraodon fluviatilis).</title>
        <authorList>
            <person name="Yao C.W."/>
            <person name="Leu J.H."/>
            <person name="Huang C.J."/>
        </authorList>
    </citation>
    <scope>NUCLEOTIDE SEQUENCE [GENOMIC DNA]</scope>
</reference>
<proteinExistence type="inferred from homology"/>
<accession>O42467</accession>
<dbReference type="EMBL" id="AF007218">
    <property type="protein sequence ID" value="AAB62935.1"/>
    <property type="molecule type" value="Genomic_DNA"/>
</dbReference>
<dbReference type="SMR" id="O42467"/>
<dbReference type="GO" id="GO:0000228">
    <property type="term" value="C:nuclear chromosome"/>
    <property type="evidence" value="ECO:0007669"/>
    <property type="project" value="InterPro"/>
</dbReference>
<dbReference type="GO" id="GO:0003677">
    <property type="term" value="F:DNA binding"/>
    <property type="evidence" value="ECO:0000250"/>
    <property type="project" value="UniProtKB"/>
</dbReference>
<dbReference type="GO" id="GO:0006338">
    <property type="term" value="P:chromatin remodeling"/>
    <property type="evidence" value="ECO:0007669"/>
    <property type="project" value="InterPro"/>
</dbReference>
<dbReference type="GO" id="GO:0007399">
    <property type="term" value="P:nervous system development"/>
    <property type="evidence" value="ECO:0007669"/>
    <property type="project" value="UniProtKB-KW"/>
</dbReference>
<dbReference type="CDD" id="cd21086">
    <property type="entry name" value="WH_NTD_SMARCB1"/>
    <property type="match status" value="1"/>
</dbReference>
<dbReference type="InterPro" id="IPR048664">
    <property type="entry name" value="INI1_DNA-bd"/>
</dbReference>
<dbReference type="InterPro" id="IPR017393">
    <property type="entry name" value="Sfh1/SNF5"/>
</dbReference>
<dbReference type="InterPro" id="IPR006939">
    <property type="entry name" value="SNF5"/>
</dbReference>
<dbReference type="PANTHER" id="PTHR10019">
    <property type="entry name" value="SNF5"/>
    <property type="match status" value="1"/>
</dbReference>
<dbReference type="Pfam" id="PF21459">
    <property type="entry name" value="INI1_DNA-bd"/>
    <property type="match status" value="1"/>
</dbReference>
<dbReference type="Pfam" id="PF04855">
    <property type="entry name" value="SNF5"/>
    <property type="match status" value="1"/>
</dbReference>
<dbReference type="PIRSF" id="PIRSF038126">
    <property type="entry name" value="SWI_SNF"/>
    <property type="match status" value="1"/>
</dbReference>
<sequence>MALSKAFGQKPVKFQLEDGGDFYMIGSEVGNYLRMFRGSLYKRYPSLWRKLASVEERKKIVESSHDHGYTQLATSVTLLKASEVEEILDGNDEKYKAVSISTEPPAYLREQKAKRNSQWVPTLPNSSHHLDAVPCSTTINRSRLGRDKKRTFPLCFDDHDPAVIHENASQSEVLVPIRLDMEIEGQKLRDAFTWNMNEKLMTPEMFAEILCDDLDLNPLAFVPAIPSAIRQQIESYPTDAILEEQTDQRVIIKLNIHVGNISLVDQFEWDMSEKENSPEKFALKLCSELGQGGEFVTTIAYSIRGQLSWHQKAYAFSENPLPTVEIAIRNTGAADQWCPLLETLTDAEMEKKIRDQDRNTRRIRRLANTAPGW</sequence>
<protein>
    <recommendedName>
        <fullName>SWI/SNF-related matrix-associated actin-dependent regulator of chromatin subfamily B member 1</fullName>
    </recommendedName>
</protein>
<keyword id="KW-0010">Activator</keyword>
<keyword id="KW-0238">DNA-binding</keyword>
<keyword id="KW-0524">Neurogenesis</keyword>
<keyword id="KW-0539">Nucleus</keyword>
<keyword id="KW-0804">Transcription</keyword>
<keyword id="KW-0805">Transcription regulation</keyword>
<comment type="function">
    <text evidence="2">Involved in chromatin-remodeling. Core component of the BAF (SWI/SNF) complex. This ATP-dependent chromatin-remodeling complex plays important roles in cell proliferation and differentiation, in cellular antiviral activities and inhibition of tumor formation. Belongs to the neural progenitors-specific chromatin remodeling complex (npBAF complex) and the neuron-specific chromatin remodeling complex (nBAF complex) and may play a role in neural development (By similarity).</text>
</comment>
<comment type="subunit">
    <text evidence="2 3">Component of the multiprotein chromatin-remodeling complexes SWI/SNF. Component of neural progenitors-specific chromatin remodeling complex (npBAF complex) and the neuron-specific chromatin remodeling complex (nBAF complex) (By similarity). Component of the BAF (SWI/SNF) chromatin remodeling complex. Component of the SWI/SNF-B (PBAF) chromatin remodeling complex. Binds to double-stranded DNA (By similarity).</text>
</comment>
<comment type="subcellular location">
    <subcellularLocation>
        <location evidence="1">Nucleus</location>
    </subcellularLocation>
</comment>
<comment type="domain">
    <text evidence="2">The N-terminal DNA-binding region is structurally similar to winged helix domains.</text>
</comment>
<comment type="similarity">
    <text evidence="4">Belongs to the SNF5 family.</text>
</comment>
<name>SNF5_DICFU</name>
<gene>
    <name type="primary">smarcb1</name>
    <name type="synonym">snf5</name>
</gene>
<feature type="chain" id="PRO_0000205954" description="SWI/SNF-related matrix-associated actin-dependent regulator of chromatin subfamily B member 1">
    <location>
        <begin position="1"/>
        <end position="373"/>
    </location>
</feature>
<feature type="region of interest" description="DNA-binding" evidence="2">
    <location>
        <begin position="1"/>
        <end position="101"/>
    </location>
</feature>